<gene>
    <name evidence="1" type="primary">nadA</name>
    <name type="ordered locus">BURPS668_0974</name>
</gene>
<organism>
    <name type="scientific">Burkholderia pseudomallei (strain 668)</name>
    <dbReference type="NCBI Taxonomy" id="320373"/>
    <lineage>
        <taxon>Bacteria</taxon>
        <taxon>Pseudomonadati</taxon>
        <taxon>Pseudomonadota</taxon>
        <taxon>Betaproteobacteria</taxon>
        <taxon>Burkholderiales</taxon>
        <taxon>Burkholderiaceae</taxon>
        <taxon>Burkholderia</taxon>
        <taxon>pseudomallei group</taxon>
    </lineage>
</organism>
<protein>
    <recommendedName>
        <fullName evidence="1">Quinolinate synthase</fullName>
        <ecNumber evidence="1">2.5.1.72</ecNumber>
    </recommendedName>
</protein>
<evidence type="ECO:0000255" key="1">
    <source>
        <dbReference type="HAMAP-Rule" id="MF_00567"/>
    </source>
</evidence>
<name>NADA_BURP6</name>
<accession>A3N6Q4</accession>
<sequence length="378" mass="40870">MQSAIKSVEYDRPLAAGAACGVGEAWAKVPDALVPDERDALKARIKALLVREKAVLVAHYYVDADLQALADETGGCVADSLEMARFGRDHDAHTLVVAGVRFMGETAKILSPGKRVLMPDLDATCSLDLGCPIDEFSQFCDAHPERTVVVYANTSAAVKARADWMVTSSIGLEIVADLHARGEKIIWAPDRHLGGYIQKKTGADMLMWQGSCLVHDEFKGIELDLLRHEYPDAKILVHPESPEGVVALADVVGSTTQLIDAAVKLDAQRFIVATDLGILHKMRLAAPGKTFIEAPTAGNSATCKSCAHCPWMAMNALSNLADVLERGHNEIFVEAAIAQRARMPIDRMLDFAARHKQRVQASGDLQRDQALFANVGAA</sequence>
<feature type="chain" id="PRO_1000024949" description="Quinolinate synthase">
    <location>
        <begin position="1"/>
        <end position="378"/>
    </location>
</feature>
<feature type="binding site" evidence="1">
    <location>
        <position position="59"/>
    </location>
    <ligand>
        <name>iminosuccinate</name>
        <dbReference type="ChEBI" id="CHEBI:77875"/>
    </ligand>
</feature>
<feature type="binding site" evidence="1">
    <location>
        <position position="80"/>
    </location>
    <ligand>
        <name>iminosuccinate</name>
        <dbReference type="ChEBI" id="CHEBI:77875"/>
    </ligand>
</feature>
<feature type="binding site" evidence="1">
    <location>
        <position position="125"/>
    </location>
    <ligand>
        <name>[4Fe-4S] cluster</name>
        <dbReference type="ChEBI" id="CHEBI:49883"/>
    </ligand>
</feature>
<feature type="binding site" evidence="1">
    <location>
        <begin position="151"/>
        <end position="153"/>
    </location>
    <ligand>
        <name>iminosuccinate</name>
        <dbReference type="ChEBI" id="CHEBI:77875"/>
    </ligand>
</feature>
<feature type="binding site" evidence="1">
    <location>
        <position position="168"/>
    </location>
    <ligand>
        <name>iminosuccinate</name>
        <dbReference type="ChEBI" id="CHEBI:77875"/>
    </ligand>
</feature>
<feature type="binding site" evidence="1">
    <location>
        <position position="212"/>
    </location>
    <ligand>
        <name>[4Fe-4S] cluster</name>
        <dbReference type="ChEBI" id="CHEBI:49883"/>
    </ligand>
</feature>
<feature type="binding site" evidence="1">
    <location>
        <begin position="238"/>
        <end position="240"/>
    </location>
    <ligand>
        <name>iminosuccinate</name>
        <dbReference type="ChEBI" id="CHEBI:77875"/>
    </ligand>
</feature>
<feature type="binding site" evidence="1">
    <location>
        <position position="255"/>
    </location>
    <ligand>
        <name>iminosuccinate</name>
        <dbReference type="ChEBI" id="CHEBI:77875"/>
    </ligand>
</feature>
<feature type="binding site" evidence="1">
    <location>
        <position position="309"/>
    </location>
    <ligand>
        <name>[4Fe-4S] cluster</name>
        <dbReference type="ChEBI" id="CHEBI:49883"/>
    </ligand>
</feature>
<dbReference type="EC" id="2.5.1.72" evidence="1"/>
<dbReference type="EMBL" id="CP000570">
    <property type="protein sequence ID" value="ABN83145.1"/>
    <property type="molecule type" value="Genomic_DNA"/>
</dbReference>
<dbReference type="RefSeq" id="WP_011851207.1">
    <property type="nucleotide sequence ID" value="NC_009074.1"/>
</dbReference>
<dbReference type="SMR" id="A3N6Q4"/>
<dbReference type="KEGG" id="bpd:BURPS668_0974"/>
<dbReference type="HOGENOM" id="CLU_047382_1_0_4"/>
<dbReference type="UniPathway" id="UPA00253">
    <property type="reaction ID" value="UER00327"/>
</dbReference>
<dbReference type="GO" id="GO:0005829">
    <property type="term" value="C:cytosol"/>
    <property type="evidence" value="ECO:0007669"/>
    <property type="project" value="TreeGrafter"/>
</dbReference>
<dbReference type="GO" id="GO:0051539">
    <property type="term" value="F:4 iron, 4 sulfur cluster binding"/>
    <property type="evidence" value="ECO:0007669"/>
    <property type="project" value="UniProtKB-KW"/>
</dbReference>
<dbReference type="GO" id="GO:0046872">
    <property type="term" value="F:metal ion binding"/>
    <property type="evidence" value="ECO:0007669"/>
    <property type="project" value="UniProtKB-KW"/>
</dbReference>
<dbReference type="GO" id="GO:0008987">
    <property type="term" value="F:quinolinate synthetase A activity"/>
    <property type="evidence" value="ECO:0007669"/>
    <property type="project" value="UniProtKB-UniRule"/>
</dbReference>
<dbReference type="GO" id="GO:0034628">
    <property type="term" value="P:'de novo' NAD biosynthetic process from L-aspartate"/>
    <property type="evidence" value="ECO:0007669"/>
    <property type="project" value="TreeGrafter"/>
</dbReference>
<dbReference type="FunFam" id="3.40.50.10800:FF:000001">
    <property type="entry name" value="Quinolinate synthase A"/>
    <property type="match status" value="1"/>
</dbReference>
<dbReference type="FunFam" id="3.40.50.10800:FF:000003">
    <property type="entry name" value="Quinolinate synthase A"/>
    <property type="match status" value="1"/>
</dbReference>
<dbReference type="Gene3D" id="3.40.50.10800">
    <property type="entry name" value="NadA-like"/>
    <property type="match status" value="3"/>
</dbReference>
<dbReference type="HAMAP" id="MF_00567">
    <property type="entry name" value="NadA_type1"/>
    <property type="match status" value="1"/>
</dbReference>
<dbReference type="InterPro" id="IPR003473">
    <property type="entry name" value="NadA"/>
</dbReference>
<dbReference type="InterPro" id="IPR036094">
    <property type="entry name" value="NadA_sf"/>
</dbReference>
<dbReference type="InterPro" id="IPR023513">
    <property type="entry name" value="Quinolinate_synth_A_type1"/>
</dbReference>
<dbReference type="NCBIfam" id="TIGR00550">
    <property type="entry name" value="nadA"/>
    <property type="match status" value="1"/>
</dbReference>
<dbReference type="NCBIfam" id="NF006877">
    <property type="entry name" value="PRK09375.1-1"/>
    <property type="match status" value="1"/>
</dbReference>
<dbReference type="NCBIfam" id="NF006878">
    <property type="entry name" value="PRK09375.1-2"/>
    <property type="match status" value="1"/>
</dbReference>
<dbReference type="PANTHER" id="PTHR30573:SF0">
    <property type="entry name" value="QUINOLINATE SYNTHASE, CHLOROPLASTIC"/>
    <property type="match status" value="1"/>
</dbReference>
<dbReference type="PANTHER" id="PTHR30573">
    <property type="entry name" value="QUINOLINATE SYNTHETASE A"/>
    <property type="match status" value="1"/>
</dbReference>
<dbReference type="Pfam" id="PF02445">
    <property type="entry name" value="NadA"/>
    <property type="match status" value="1"/>
</dbReference>
<dbReference type="SUPFAM" id="SSF142754">
    <property type="entry name" value="NadA-like"/>
    <property type="match status" value="1"/>
</dbReference>
<keyword id="KW-0004">4Fe-4S</keyword>
<keyword id="KW-0963">Cytoplasm</keyword>
<keyword id="KW-0408">Iron</keyword>
<keyword id="KW-0411">Iron-sulfur</keyword>
<keyword id="KW-0479">Metal-binding</keyword>
<keyword id="KW-0662">Pyridine nucleotide biosynthesis</keyword>
<keyword id="KW-0808">Transferase</keyword>
<reference key="1">
    <citation type="journal article" date="2010" name="Genome Biol. Evol.">
        <title>Continuing evolution of Burkholderia mallei through genome reduction and large-scale rearrangements.</title>
        <authorList>
            <person name="Losada L."/>
            <person name="Ronning C.M."/>
            <person name="DeShazer D."/>
            <person name="Woods D."/>
            <person name="Fedorova N."/>
            <person name="Kim H.S."/>
            <person name="Shabalina S.A."/>
            <person name="Pearson T.R."/>
            <person name="Brinkac L."/>
            <person name="Tan P."/>
            <person name="Nandi T."/>
            <person name="Crabtree J."/>
            <person name="Badger J."/>
            <person name="Beckstrom-Sternberg S."/>
            <person name="Saqib M."/>
            <person name="Schutzer S.E."/>
            <person name="Keim P."/>
            <person name="Nierman W.C."/>
        </authorList>
    </citation>
    <scope>NUCLEOTIDE SEQUENCE [LARGE SCALE GENOMIC DNA]</scope>
    <source>
        <strain>668</strain>
    </source>
</reference>
<proteinExistence type="inferred from homology"/>
<comment type="function">
    <text evidence="1">Catalyzes the condensation of iminoaspartate with dihydroxyacetone phosphate to form quinolinate.</text>
</comment>
<comment type="catalytic activity">
    <reaction evidence="1">
        <text>iminosuccinate + dihydroxyacetone phosphate = quinolinate + phosphate + 2 H2O + H(+)</text>
        <dbReference type="Rhea" id="RHEA:25888"/>
        <dbReference type="ChEBI" id="CHEBI:15377"/>
        <dbReference type="ChEBI" id="CHEBI:15378"/>
        <dbReference type="ChEBI" id="CHEBI:29959"/>
        <dbReference type="ChEBI" id="CHEBI:43474"/>
        <dbReference type="ChEBI" id="CHEBI:57642"/>
        <dbReference type="ChEBI" id="CHEBI:77875"/>
        <dbReference type="EC" id="2.5.1.72"/>
    </reaction>
    <physiologicalReaction direction="left-to-right" evidence="1">
        <dbReference type="Rhea" id="RHEA:25889"/>
    </physiologicalReaction>
</comment>
<comment type="cofactor">
    <cofactor evidence="1">
        <name>[4Fe-4S] cluster</name>
        <dbReference type="ChEBI" id="CHEBI:49883"/>
    </cofactor>
    <text evidence="1">Binds 1 [4Fe-4S] cluster per subunit.</text>
</comment>
<comment type="pathway">
    <text evidence="1">Cofactor biosynthesis; NAD(+) biosynthesis; quinolinate from iminoaspartate: step 1/1.</text>
</comment>
<comment type="subcellular location">
    <subcellularLocation>
        <location evidence="1">Cytoplasm</location>
    </subcellularLocation>
</comment>
<comment type="similarity">
    <text evidence="1">Belongs to the quinolinate synthase family. Type 1 subfamily.</text>
</comment>